<organism>
    <name type="scientific">Streptococcus pneumoniae</name>
    <dbReference type="NCBI Taxonomy" id="1313"/>
    <lineage>
        <taxon>Bacteria</taxon>
        <taxon>Bacillati</taxon>
        <taxon>Bacillota</taxon>
        <taxon>Bacilli</taxon>
        <taxon>Lactobacillales</taxon>
        <taxon>Streptococcaceae</taxon>
        <taxon>Streptococcus</taxon>
    </lineage>
</organism>
<dbReference type="EC" id="2.7.-.-"/>
<dbReference type="EMBL" id="CR931641">
    <property type="protein sequence ID" value="CAI32887.1"/>
    <property type="molecule type" value="Genomic_DNA"/>
</dbReference>
<dbReference type="SMR" id="Q4K2U1"/>
<dbReference type="GO" id="GO:0016772">
    <property type="term" value="F:transferase activity, transferring phosphorus-containing groups"/>
    <property type="evidence" value="ECO:0007669"/>
    <property type="project" value="InterPro"/>
</dbReference>
<dbReference type="GO" id="GO:0000271">
    <property type="term" value="P:polysaccharide biosynthetic process"/>
    <property type="evidence" value="ECO:0007669"/>
    <property type="project" value="UniProtKB-KW"/>
</dbReference>
<dbReference type="InterPro" id="IPR047141">
    <property type="entry name" value="Stealth"/>
</dbReference>
<dbReference type="InterPro" id="IPR021520">
    <property type="entry name" value="Stealth_CR2"/>
</dbReference>
<dbReference type="PANTHER" id="PTHR24045">
    <property type="match status" value="1"/>
</dbReference>
<dbReference type="PANTHER" id="PTHR24045:SF0">
    <property type="entry name" value="N-ACETYLGLUCOSAMINE-1-PHOSPHOTRANSFERASE SUBUNITS ALPHA_BETA"/>
    <property type="match status" value="1"/>
</dbReference>
<dbReference type="Pfam" id="PF11380">
    <property type="entry name" value="Stealth_CR2"/>
    <property type="match status" value="1"/>
</dbReference>
<proteinExistence type="inferred from homology"/>
<evidence type="ECO:0000305" key="1"/>
<name>WCWK5_STREE</name>
<keyword id="KW-0270">Exopolysaccharide synthesis</keyword>
<keyword id="KW-0808">Transferase</keyword>
<reference key="1">
    <citation type="journal article" date="2006" name="PLoS Genet.">
        <title>Genetic analysis of the capsular biosynthetic locus from all 90 pneumococcal serotypes.</title>
        <authorList>
            <person name="Bentley S.D."/>
            <person name="Aanensen D.M."/>
            <person name="Mavroidi A."/>
            <person name="Saunders D."/>
            <person name="Rabbinowitsch E."/>
            <person name="Collins M."/>
            <person name="Donohoe K."/>
            <person name="Harris D."/>
            <person name="Murphy L."/>
            <person name="Quail M.A."/>
            <person name="Samuel G."/>
            <person name="Skovsted I.C."/>
            <person name="Kaltoft M.S."/>
            <person name="Barrell B."/>
            <person name="Reeves P.R."/>
            <person name="Parkhill J."/>
            <person name="Spratt B.G."/>
        </authorList>
    </citation>
    <scope>NUCLEOTIDE SEQUENCE [GENOMIC DNA]</scope>
    <source>
        <strain>Johnson / Serotype 7B</strain>
    </source>
</reference>
<reference key="2">
    <citation type="journal article" date="2005" name="PLoS Comput. Biol.">
        <title>Stealth proteins: in silico identification of a novel protein family rendering bacterial pathogens invisible to host immune defense.</title>
        <authorList>
            <person name="Sperisen P."/>
            <person name="Schmid C.D."/>
            <person name="Bucher P."/>
            <person name="Zilian O."/>
        </authorList>
    </citation>
    <scope>IDENTIFICATION AS A STEALTH PROTEIN</scope>
    <scope>PREDICTION OF FUNCTION</scope>
</reference>
<accession>Q4K2U1</accession>
<sequence>MKNMEQIDFVVTWVNDKDVDWCKRKSEFEKEYNIFQDLNSEERYREWGLMKYWFRAVEKYAPWVNKIYFITEGHVPNWLDVNHPKLVHVKHEDYIEKQFLPTFNSNVIEMNLIHLKDLSEKFVLFNDDFFINDFVKQSDFFENNLPKDTGIFSPLIPRENSLTPIILNNMEIINKYFSKKKILEQNFSKFFNIKYGKHLLKNICLLPWSDLLGFYDNHIPVSYCKSNFLEVYEKEHAIFNLTFKNKFRNKNEINHWLIRYWQLSSGNFIPRNINFGKNYAISNDPTDIINELKLSKYKIICINDGESIDNFDAVKGLMINAFEKKFPEKSSFEKK</sequence>
<protein>
    <recommendedName>
        <fullName>Capsular polysaccharide phosphotransferase WcwK</fullName>
        <ecNumber>2.7.-.-</ecNumber>
    </recommendedName>
    <alternativeName>
        <fullName>Stealth protein WcwK</fullName>
    </alternativeName>
</protein>
<comment type="miscellaneous">
    <text>Stealth proteins are part of a protein family that is conserved from bacteria to higher eukaryotes. Family members were first identified in microbes as proteins that help pathogens to elude the host innate immune system. Microbial stealth proteins are involved in the biosynthesis of exopolysaccharides. Stealth proteins are predicted to function as hexose-1-phosphoryltransferases.</text>
</comment>
<comment type="similarity">
    <text evidence="1">Belongs to the stealth family.</text>
</comment>
<gene>
    <name type="primary">wcwK</name>
    <name type="ORF">SPC07B_0012</name>
</gene>
<feature type="chain" id="PRO_0000235971" description="Capsular polysaccharide phosphotransferase WcwK">
    <location>
        <begin position="1"/>
        <end position="335"/>
    </location>
</feature>